<proteinExistence type="inferred from homology"/>
<organism>
    <name type="scientific">Shewanella denitrificans (strain OS217 / ATCC BAA-1090 / DSM 15013)</name>
    <dbReference type="NCBI Taxonomy" id="318161"/>
    <lineage>
        <taxon>Bacteria</taxon>
        <taxon>Pseudomonadati</taxon>
        <taxon>Pseudomonadota</taxon>
        <taxon>Gammaproteobacteria</taxon>
        <taxon>Alteromonadales</taxon>
        <taxon>Shewanellaceae</taxon>
        <taxon>Shewanella</taxon>
    </lineage>
</organism>
<reference key="1">
    <citation type="submission" date="2006-03" db="EMBL/GenBank/DDBJ databases">
        <title>Complete sequence of Shewanella denitrificans OS217.</title>
        <authorList>
            <consortium name="US DOE Joint Genome Institute"/>
            <person name="Copeland A."/>
            <person name="Lucas S."/>
            <person name="Lapidus A."/>
            <person name="Barry K."/>
            <person name="Detter J.C."/>
            <person name="Glavina del Rio T."/>
            <person name="Hammon N."/>
            <person name="Israni S."/>
            <person name="Dalin E."/>
            <person name="Tice H."/>
            <person name="Pitluck S."/>
            <person name="Brettin T."/>
            <person name="Bruce D."/>
            <person name="Han C."/>
            <person name="Tapia R."/>
            <person name="Gilna P."/>
            <person name="Kiss H."/>
            <person name="Schmutz J."/>
            <person name="Larimer F."/>
            <person name="Land M."/>
            <person name="Hauser L."/>
            <person name="Kyrpides N."/>
            <person name="Lykidis A."/>
            <person name="Richardson P."/>
        </authorList>
    </citation>
    <scope>NUCLEOTIDE SEQUENCE [LARGE SCALE GENOMIC DNA]</scope>
    <source>
        <strain>OS217 / ATCC BAA-1090 / DSM 15013</strain>
    </source>
</reference>
<gene>
    <name evidence="1" type="primary">rpsF</name>
    <name type="ordered locus">Sden_0515</name>
</gene>
<accession>Q12RW9</accession>
<name>RS6_SHEDO</name>
<protein>
    <recommendedName>
        <fullName evidence="1">Small ribosomal subunit protein bS6</fullName>
    </recommendedName>
    <alternativeName>
        <fullName evidence="3">30S ribosomal protein S6</fullName>
    </alternativeName>
</protein>
<keyword id="KW-1185">Reference proteome</keyword>
<keyword id="KW-0687">Ribonucleoprotein</keyword>
<keyword id="KW-0689">Ribosomal protein</keyword>
<keyword id="KW-0694">RNA-binding</keyword>
<keyword id="KW-0699">rRNA-binding</keyword>
<feature type="chain" id="PRO_1000005346" description="Small ribosomal subunit protein bS6">
    <location>
        <begin position="1"/>
        <end position="130"/>
    </location>
</feature>
<feature type="region of interest" description="Disordered" evidence="2">
    <location>
        <begin position="96"/>
        <end position="130"/>
    </location>
</feature>
<feature type="compositionally biased region" description="Basic and acidic residues" evidence="2">
    <location>
        <begin position="104"/>
        <end position="118"/>
    </location>
</feature>
<feature type="compositionally biased region" description="Acidic residues" evidence="2">
    <location>
        <begin position="119"/>
        <end position="130"/>
    </location>
</feature>
<dbReference type="EMBL" id="CP000302">
    <property type="protein sequence ID" value="ABE53807.1"/>
    <property type="molecule type" value="Genomic_DNA"/>
</dbReference>
<dbReference type="RefSeq" id="WP_011494973.1">
    <property type="nucleotide sequence ID" value="NC_007954.1"/>
</dbReference>
<dbReference type="SMR" id="Q12RW9"/>
<dbReference type="STRING" id="318161.Sden_0515"/>
<dbReference type="KEGG" id="sdn:Sden_0515"/>
<dbReference type="eggNOG" id="COG0360">
    <property type="taxonomic scope" value="Bacteria"/>
</dbReference>
<dbReference type="HOGENOM" id="CLU_113441_6_1_6"/>
<dbReference type="OrthoDB" id="9812702at2"/>
<dbReference type="Proteomes" id="UP000001982">
    <property type="component" value="Chromosome"/>
</dbReference>
<dbReference type="GO" id="GO:0022627">
    <property type="term" value="C:cytosolic small ribosomal subunit"/>
    <property type="evidence" value="ECO:0007669"/>
    <property type="project" value="TreeGrafter"/>
</dbReference>
<dbReference type="GO" id="GO:0070181">
    <property type="term" value="F:small ribosomal subunit rRNA binding"/>
    <property type="evidence" value="ECO:0007669"/>
    <property type="project" value="TreeGrafter"/>
</dbReference>
<dbReference type="GO" id="GO:0003735">
    <property type="term" value="F:structural constituent of ribosome"/>
    <property type="evidence" value="ECO:0007669"/>
    <property type="project" value="InterPro"/>
</dbReference>
<dbReference type="GO" id="GO:0006412">
    <property type="term" value="P:translation"/>
    <property type="evidence" value="ECO:0007669"/>
    <property type="project" value="UniProtKB-UniRule"/>
</dbReference>
<dbReference type="CDD" id="cd00473">
    <property type="entry name" value="bS6"/>
    <property type="match status" value="1"/>
</dbReference>
<dbReference type="FunFam" id="3.30.70.60:FF:000003">
    <property type="entry name" value="30S ribosomal protein S6"/>
    <property type="match status" value="1"/>
</dbReference>
<dbReference type="Gene3D" id="3.30.70.60">
    <property type="match status" value="1"/>
</dbReference>
<dbReference type="HAMAP" id="MF_00360">
    <property type="entry name" value="Ribosomal_bS6"/>
    <property type="match status" value="1"/>
</dbReference>
<dbReference type="InterPro" id="IPR000529">
    <property type="entry name" value="Ribosomal_bS6"/>
</dbReference>
<dbReference type="InterPro" id="IPR035980">
    <property type="entry name" value="Ribosomal_bS6_sf"/>
</dbReference>
<dbReference type="InterPro" id="IPR020814">
    <property type="entry name" value="Ribosomal_S6_plastid/chlpt"/>
</dbReference>
<dbReference type="InterPro" id="IPR014717">
    <property type="entry name" value="Transl_elong_EF1B/ribsomal_bS6"/>
</dbReference>
<dbReference type="NCBIfam" id="TIGR00166">
    <property type="entry name" value="S6"/>
    <property type="match status" value="1"/>
</dbReference>
<dbReference type="PANTHER" id="PTHR21011">
    <property type="entry name" value="MITOCHONDRIAL 28S RIBOSOMAL PROTEIN S6"/>
    <property type="match status" value="1"/>
</dbReference>
<dbReference type="PANTHER" id="PTHR21011:SF1">
    <property type="entry name" value="SMALL RIBOSOMAL SUBUNIT PROTEIN BS6M"/>
    <property type="match status" value="1"/>
</dbReference>
<dbReference type="Pfam" id="PF01250">
    <property type="entry name" value="Ribosomal_S6"/>
    <property type="match status" value="1"/>
</dbReference>
<dbReference type="SUPFAM" id="SSF54995">
    <property type="entry name" value="Ribosomal protein S6"/>
    <property type="match status" value="1"/>
</dbReference>
<comment type="function">
    <text evidence="1">Binds together with bS18 to 16S ribosomal RNA.</text>
</comment>
<comment type="similarity">
    <text evidence="1">Belongs to the bacterial ribosomal protein bS6 family.</text>
</comment>
<sequence>MRHYEIVFMVHPDQSEQVPGMIERYSGVITAANGTIHRLEDWGRRQLAYPIQDLHKAHYVLMNVEATAESIEELETAFRFNDAVLRNMVMRTKVAVTEASPMAKARDERDSRRSPSDDRIEEESAEENAE</sequence>
<evidence type="ECO:0000255" key="1">
    <source>
        <dbReference type="HAMAP-Rule" id="MF_00360"/>
    </source>
</evidence>
<evidence type="ECO:0000256" key="2">
    <source>
        <dbReference type="SAM" id="MobiDB-lite"/>
    </source>
</evidence>
<evidence type="ECO:0000305" key="3"/>